<comment type="developmental stage">
    <text evidence="3">Expressed in late sporogonial stages.</text>
</comment>
<keyword id="KW-0175">Coiled coil</keyword>
<keyword id="KW-1185">Reference proteome</keyword>
<name>Y9I8_ENCCU</name>
<proteinExistence type="evidence at protein level"/>
<dbReference type="EMBL" id="AL590451">
    <property type="protein sequence ID" value="CAD27161.1"/>
    <property type="molecule type" value="Genomic_DNA"/>
</dbReference>
<dbReference type="RefSeq" id="NP_001402442.1">
    <property type="nucleotide sequence ID" value="NM_001415509.1"/>
</dbReference>
<dbReference type="RefSeq" id="XP_955742.1">
    <property type="nucleotide sequence ID" value="XM_950649.1"/>
</dbReference>
<dbReference type="SMR" id="Q8STL0"/>
<dbReference type="GeneID" id="860530"/>
<dbReference type="VEuPathDB" id="MicrosporidiaDB:ECU09_1880"/>
<dbReference type="HOGENOM" id="CLU_663973_0_0_1"/>
<dbReference type="InParanoid" id="Q8STL0"/>
<dbReference type="OrthoDB" id="2190888at2759"/>
<dbReference type="Proteomes" id="UP000000819">
    <property type="component" value="Chromosome IX"/>
</dbReference>
<organism>
    <name type="scientific">Encephalitozoon cuniculi (strain GB-M1)</name>
    <name type="common">Microsporidian parasite</name>
    <dbReference type="NCBI Taxonomy" id="284813"/>
    <lineage>
        <taxon>Eukaryota</taxon>
        <taxon>Fungi</taxon>
        <taxon>Fungi incertae sedis</taxon>
        <taxon>Microsporidia</taxon>
        <taxon>Unikaryonidae</taxon>
        <taxon>Encephalitozoon</taxon>
    </lineage>
</organism>
<feature type="chain" id="PRO_0000382783" description="Uncharacterized protein ECU09_1880">
    <location>
        <begin position="1"/>
        <end position="414"/>
    </location>
</feature>
<feature type="region of interest" description="Disordered" evidence="2">
    <location>
        <begin position="87"/>
        <end position="117"/>
    </location>
</feature>
<feature type="coiled-coil region" evidence="1">
    <location>
        <begin position="243"/>
        <end position="405"/>
    </location>
</feature>
<feature type="compositionally biased region" description="Basic and acidic residues" evidence="2">
    <location>
        <begin position="88"/>
        <end position="101"/>
    </location>
</feature>
<sequence length="414" mass="47376">MIAIMVLMQLCISKIVVVDDLGVTDKQNRDPDIARKVMNVLGGTIKNSRDTVLLSNSKGTKRIVGDDENASSAYDRGSQGEAKLFAKTNDDNKTNGRETHLRPSPSKPEYTGRPTQNLQVEDPVPEIGRGYQESSLLNPLHTRSLFNGDDQQIQGRNMYERPSMQSYDPENLLTPYDSNQGKYIPFSFGGTGDSFTGAPGYTEAPLEDRMGFGMGGNRNLSDEARARKSFIILKMAQSKQKESMLQSSIDKLLQDIDQVAEKIQDTQKMKDGMMSRLHTKKNHLRNLQINIKEVEVQRGRTLALIRLSRNELLKLSKMIDDQRSKLALLEDEEKIFSDRIKKYDEEYDVGNRELQLDETRTEEIKRSIEELERMYNVLKIRNNELLNERNKESAIRNKLEMEVERFDRSAIDFI</sequence>
<gene>
    <name type="ordered locus">ECU09_1880</name>
</gene>
<protein>
    <recommendedName>
        <fullName>Uncharacterized protein ECU09_1880</fullName>
    </recommendedName>
</protein>
<accession>Q8STL0</accession>
<evidence type="ECO:0000255" key="1"/>
<evidence type="ECO:0000256" key="2">
    <source>
        <dbReference type="SAM" id="MobiDB-lite"/>
    </source>
</evidence>
<evidence type="ECO:0000269" key="3">
    <source>
    </source>
</evidence>
<reference key="1">
    <citation type="journal article" date="2001" name="Nature">
        <title>Genome sequence and gene compaction of the eukaryote parasite Encephalitozoon cuniculi.</title>
        <authorList>
            <person name="Katinka M.D."/>
            <person name="Duprat S."/>
            <person name="Cornillot E."/>
            <person name="Metenier G."/>
            <person name="Thomarat F."/>
            <person name="Prensier G."/>
            <person name="Barbe V."/>
            <person name="Peyretaillade E."/>
            <person name="Brottier P."/>
            <person name="Wincker P."/>
            <person name="Delbac F."/>
            <person name="El Alaoui H."/>
            <person name="Peyret P."/>
            <person name="Saurin W."/>
            <person name="Gouy M."/>
            <person name="Weissenbach J."/>
            <person name="Vivares C.P."/>
        </authorList>
    </citation>
    <scope>NUCLEOTIDE SEQUENCE [LARGE SCALE GENOMIC DNA]</scope>
    <source>
        <strain>GB-M1</strain>
    </source>
</reference>
<reference key="2">
    <citation type="journal article" date="2006" name="Proteomics">
        <title>Proteomic analysis of the eukaryotic parasite Encephalitozoon cuniculi (microsporidia): a reference map for proteins expressed in late sporogonial stages.</title>
        <authorList>
            <person name="Brosson D."/>
            <person name="Kuhn L."/>
            <person name="Delbac F."/>
            <person name="Garin J."/>
            <person name="Vivares C.P."/>
            <person name="Texier C."/>
        </authorList>
    </citation>
    <scope>IDENTIFICATION BY MASS SPECTROMETRY [LARGE SCALE ANALYSIS]</scope>
    <scope>DEVELOPMENTAL STAGE</scope>
</reference>